<name>TSAD_YERPP</name>
<comment type="function">
    <text evidence="1">Required for the formation of a threonylcarbamoyl group on adenosine at position 37 (t(6)A37) in tRNAs that read codons beginning with adenine. Is involved in the transfer of the threonylcarbamoyl moiety of threonylcarbamoyl-AMP (TC-AMP) to the N6 group of A37, together with TsaE and TsaB. TsaD likely plays a direct catalytic role in this reaction.</text>
</comment>
<comment type="catalytic activity">
    <reaction evidence="1">
        <text>L-threonylcarbamoyladenylate + adenosine(37) in tRNA = N(6)-L-threonylcarbamoyladenosine(37) in tRNA + AMP + H(+)</text>
        <dbReference type="Rhea" id="RHEA:37059"/>
        <dbReference type="Rhea" id="RHEA-COMP:10162"/>
        <dbReference type="Rhea" id="RHEA-COMP:10163"/>
        <dbReference type="ChEBI" id="CHEBI:15378"/>
        <dbReference type="ChEBI" id="CHEBI:73682"/>
        <dbReference type="ChEBI" id="CHEBI:74411"/>
        <dbReference type="ChEBI" id="CHEBI:74418"/>
        <dbReference type="ChEBI" id="CHEBI:456215"/>
        <dbReference type="EC" id="2.3.1.234"/>
    </reaction>
</comment>
<comment type="cofactor">
    <cofactor evidence="1">
        <name>Fe(2+)</name>
        <dbReference type="ChEBI" id="CHEBI:29033"/>
    </cofactor>
    <text evidence="1">Binds 1 Fe(2+) ion per subunit.</text>
</comment>
<comment type="subcellular location">
    <subcellularLocation>
        <location evidence="1">Cytoplasm</location>
    </subcellularLocation>
</comment>
<comment type="similarity">
    <text evidence="1">Belongs to the KAE1 / TsaD family.</text>
</comment>
<protein>
    <recommendedName>
        <fullName evidence="1">tRNA N6-adenosine threonylcarbamoyltransferase</fullName>
        <ecNumber evidence="1">2.3.1.234</ecNumber>
    </recommendedName>
    <alternativeName>
        <fullName evidence="1">N6-L-threonylcarbamoyladenine synthase</fullName>
        <shortName evidence="1">t(6)A synthase</shortName>
    </alternativeName>
    <alternativeName>
        <fullName evidence="1">t(6)A37 threonylcarbamoyladenosine biosynthesis protein TsaD</fullName>
    </alternativeName>
    <alternativeName>
        <fullName evidence="1">tRNA threonylcarbamoyladenosine biosynthesis protein TsaD</fullName>
    </alternativeName>
</protein>
<evidence type="ECO:0000255" key="1">
    <source>
        <dbReference type="HAMAP-Rule" id="MF_01445"/>
    </source>
</evidence>
<proteinExistence type="inferred from homology"/>
<organism>
    <name type="scientific">Yersinia pestis (strain Pestoides F)</name>
    <dbReference type="NCBI Taxonomy" id="386656"/>
    <lineage>
        <taxon>Bacteria</taxon>
        <taxon>Pseudomonadati</taxon>
        <taxon>Pseudomonadota</taxon>
        <taxon>Gammaproteobacteria</taxon>
        <taxon>Enterobacterales</taxon>
        <taxon>Yersiniaceae</taxon>
        <taxon>Yersinia</taxon>
    </lineage>
</organism>
<accession>A4THT1</accession>
<reference key="1">
    <citation type="submission" date="2007-02" db="EMBL/GenBank/DDBJ databases">
        <title>Complete sequence of chromosome of Yersinia pestis Pestoides F.</title>
        <authorList>
            <consortium name="US DOE Joint Genome Institute"/>
            <person name="Copeland A."/>
            <person name="Lucas S."/>
            <person name="Lapidus A."/>
            <person name="Barry K."/>
            <person name="Detter J.C."/>
            <person name="Glavina del Rio T."/>
            <person name="Hammon N."/>
            <person name="Israni S."/>
            <person name="Dalin E."/>
            <person name="Tice H."/>
            <person name="Pitluck S."/>
            <person name="Di Bartolo G."/>
            <person name="Chain P."/>
            <person name="Malfatti S."/>
            <person name="Shin M."/>
            <person name="Vergez L."/>
            <person name="Schmutz J."/>
            <person name="Larimer F."/>
            <person name="Land M."/>
            <person name="Hauser L."/>
            <person name="Worsham P."/>
            <person name="Chu M."/>
            <person name="Bearden S."/>
            <person name="Garcia E."/>
            <person name="Richardson P."/>
        </authorList>
    </citation>
    <scope>NUCLEOTIDE SEQUENCE [LARGE SCALE GENOMIC DNA]</scope>
    <source>
        <strain>Pestoides F</strain>
    </source>
</reference>
<dbReference type="EC" id="2.3.1.234" evidence="1"/>
<dbReference type="EMBL" id="CP000668">
    <property type="protein sequence ID" value="ABP38843.1"/>
    <property type="molecule type" value="Genomic_DNA"/>
</dbReference>
<dbReference type="RefSeq" id="WP_002212201.1">
    <property type="nucleotide sequence ID" value="NZ_CP009715.1"/>
</dbReference>
<dbReference type="SMR" id="A4THT1"/>
<dbReference type="GeneID" id="57973978"/>
<dbReference type="KEGG" id="ypp:YPDSF_0430"/>
<dbReference type="PATRIC" id="fig|386656.14.peg.1737"/>
<dbReference type="GO" id="GO:0005737">
    <property type="term" value="C:cytoplasm"/>
    <property type="evidence" value="ECO:0007669"/>
    <property type="project" value="UniProtKB-SubCell"/>
</dbReference>
<dbReference type="GO" id="GO:0005506">
    <property type="term" value="F:iron ion binding"/>
    <property type="evidence" value="ECO:0007669"/>
    <property type="project" value="UniProtKB-UniRule"/>
</dbReference>
<dbReference type="GO" id="GO:0061711">
    <property type="term" value="F:N(6)-L-threonylcarbamoyladenine synthase activity"/>
    <property type="evidence" value="ECO:0007669"/>
    <property type="project" value="UniProtKB-EC"/>
</dbReference>
<dbReference type="GO" id="GO:0002949">
    <property type="term" value="P:tRNA threonylcarbamoyladenosine modification"/>
    <property type="evidence" value="ECO:0007669"/>
    <property type="project" value="UniProtKB-UniRule"/>
</dbReference>
<dbReference type="CDD" id="cd24133">
    <property type="entry name" value="ASKHA_NBD_TsaD_bac"/>
    <property type="match status" value="1"/>
</dbReference>
<dbReference type="FunFam" id="3.30.420.40:FF:000031">
    <property type="entry name" value="tRNA N6-adenosine threonylcarbamoyltransferase"/>
    <property type="match status" value="1"/>
</dbReference>
<dbReference type="Gene3D" id="3.30.420.40">
    <property type="match status" value="2"/>
</dbReference>
<dbReference type="HAMAP" id="MF_01445">
    <property type="entry name" value="TsaD"/>
    <property type="match status" value="1"/>
</dbReference>
<dbReference type="InterPro" id="IPR043129">
    <property type="entry name" value="ATPase_NBD"/>
</dbReference>
<dbReference type="InterPro" id="IPR000905">
    <property type="entry name" value="Gcp-like_dom"/>
</dbReference>
<dbReference type="InterPro" id="IPR017861">
    <property type="entry name" value="KAE1/TsaD"/>
</dbReference>
<dbReference type="InterPro" id="IPR017860">
    <property type="entry name" value="Peptidase_M22_CS"/>
</dbReference>
<dbReference type="InterPro" id="IPR022450">
    <property type="entry name" value="TsaD"/>
</dbReference>
<dbReference type="NCBIfam" id="TIGR00329">
    <property type="entry name" value="gcp_kae1"/>
    <property type="match status" value="1"/>
</dbReference>
<dbReference type="NCBIfam" id="TIGR03723">
    <property type="entry name" value="T6A_TsaD_YgjD"/>
    <property type="match status" value="1"/>
</dbReference>
<dbReference type="PANTHER" id="PTHR11735">
    <property type="entry name" value="TRNA N6-ADENOSINE THREONYLCARBAMOYLTRANSFERASE"/>
    <property type="match status" value="1"/>
</dbReference>
<dbReference type="PANTHER" id="PTHR11735:SF6">
    <property type="entry name" value="TRNA N6-ADENOSINE THREONYLCARBAMOYLTRANSFERASE, MITOCHONDRIAL"/>
    <property type="match status" value="1"/>
</dbReference>
<dbReference type="Pfam" id="PF00814">
    <property type="entry name" value="TsaD"/>
    <property type="match status" value="1"/>
</dbReference>
<dbReference type="PRINTS" id="PR00789">
    <property type="entry name" value="OSIALOPTASE"/>
</dbReference>
<dbReference type="SUPFAM" id="SSF53067">
    <property type="entry name" value="Actin-like ATPase domain"/>
    <property type="match status" value="1"/>
</dbReference>
<dbReference type="PROSITE" id="PS01016">
    <property type="entry name" value="GLYCOPROTEASE"/>
    <property type="match status" value="1"/>
</dbReference>
<sequence length="337" mass="36041">MRVLGIETSCDETGIAVYDDKAGLLANQLYSQVKLHADYGGVVPELASRDHVRKTVPLIQAALKEANLSAKDIDAVAYTAGPGLVGALLVGATIGRALAFAWGVPAVPVHHMEGHLLAPMLEENAPEFPFVALLVSGGHTQLISVTGIGEYLLLGESVDDAAGEAFDKTAKLLGLDYPGGPMLSRMAQQGTVGRFTFPRPMTDRPGLDFSFSGLKTFAANTIRANGDDDQTRADIARAFEDAVVDTLAIKSKRALDQTGFKRLVIAGGVSANQTLRLKLADMMQKRGGEVFYARPEFCTDNGAMIAYAGMVRLRSNLNSELSVSVRPRWPLSELPKV</sequence>
<keyword id="KW-0012">Acyltransferase</keyword>
<keyword id="KW-0963">Cytoplasm</keyword>
<keyword id="KW-0408">Iron</keyword>
<keyword id="KW-0479">Metal-binding</keyword>
<keyword id="KW-0808">Transferase</keyword>
<keyword id="KW-0819">tRNA processing</keyword>
<feature type="chain" id="PRO_0000303627" description="tRNA N6-adenosine threonylcarbamoyltransferase">
    <location>
        <begin position="1"/>
        <end position="337"/>
    </location>
</feature>
<feature type="binding site" evidence="1">
    <location>
        <position position="111"/>
    </location>
    <ligand>
        <name>Fe cation</name>
        <dbReference type="ChEBI" id="CHEBI:24875"/>
    </ligand>
</feature>
<feature type="binding site" evidence="1">
    <location>
        <position position="115"/>
    </location>
    <ligand>
        <name>Fe cation</name>
        <dbReference type="ChEBI" id="CHEBI:24875"/>
    </ligand>
</feature>
<feature type="binding site" evidence="1">
    <location>
        <begin position="134"/>
        <end position="138"/>
    </location>
    <ligand>
        <name>substrate</name>
    </ligand>
</feature>
<feature type="binding site" evidence="1">
    <location>
        <position position="167"/>
    </location>
    <ligand>
        <name>substrate</name>
    </ligand>
</feature>
<feature type="binding site" evidence="1">
    <location>
        <position position="180"/>
    </location>
    <ligand>
        <name>substrate</name>
    </ligand>
</feature>
<feature type="binding site" evidence="1">
    <location>
        <position position="272"/>
    </location>
    <ligand>
        <name>substrate</name>
    </ligand>
</feature>
<feature type="binding site" evidence="1">
    <location>
        <position position="300"/>
    </location>
    <ligand>
        <name>Fe cation</name>
        <dbReference type="ChEBI" id="CHEBI:24875"/>
    </ligand>
</feature>
<gene>
    <name evidence="1" type="primary">tsaD</name>
    <name type="synonym">gcp</name>
    <name type="ordered locus">YPDSF_0430</name>
</gene>